<dbReference type="EMBL" id="AY070434">
    <property type="protein sequence ID" value="AAL65261.1"/>
    <property type="molecule type" value="mRNA"/>
</dbReference>
<dbReference type="EMBL" id="AK095922">
    <property type="status" value="NOT_ANNOTATED_CDS"/>
    <property type="molecule type" value="mRNA"/>
</dbReference>
<dbReference type="EMBL" id="AK290088">
    <property type="protein sequence ID" value="BAF82777.1"/>
    <property type="molecule type" value="mRNA"/>
</dbReference>
<dbReference type="EMBL" id="AC107952">
    <property type="status" value="NOT_ANNOTATED_CDS"/>
    <property type="molecule type" value="Genomic_DNA"/>
</dbReference>
<dbReference type="EMBL" id="CH471068">
    <property type="protein sequence ID" value="EAW86776.1"/>
    <property type="status" value="ALT_SEQ"/>
    <property type="molecule type" value="Genomic_DNA"/>
</dbReference>
<dbReference type="EMBL" id="CH471068">
    <property type="protein sequence ID" value="EAW86778.1"/>
    <property type="molecule type" value="Genomic_DNA"/>
</dbReference>
<dbReference type="EMBL" id="BC002546">
    <property type="protein sequence ID" value="AAH02546.2"/>
    <property type="molecule type" value="mRNA"/>
</dbReference>
<dbReference type="CCDS" id="CCDS34895.1">
    <molecule id="Q9BUK0-4"/>
</dbReference>
<dbReference type="CCDS" id="CCDS34896.1">
    <molecule id="Q9BUK0-1"/>
</dbReference>
<dbReference type="CCDS" id="CCDS55232.1">
    <molecule id="Q9BUK0-3"/>
</dbReference>
<dbReference type="CCDS" id="CCDS55233.1">
    <molecule id="Q9BUK0-5"/>
</dbReference>
<dbReference type="CCDS" id="CCDS6166.2">
    <molecule id="Q9BUK0-2"/>
</dbReference>
<dbReference type="RefSeq" id="NP_001011667.1">
    <property type="nucleotide sequence ID" value="NM_001011667.2"/>
</dbReference>
<dbReference type="RefSeq" id="NP_001011668.1">
    <molecule id="Q9BUK0-4"/>
    <property type="nucleotide sequence ID" value="NM_001011668.3"/>
</dbReference>
<dbReference type="RefSeq" id="NP_001011669.1">
    <molecule id="Q9BUK0-3"/>
    <property type="nucleotide sequence ID" value="NM_001011669.3"/>
</dbReference>
<dbReference type="RefSeq" id="NP_001011670.1">
    <molecule id="Q9BUK0-5"/>
    <property type="nucleotide sequence ID" value="NM_001011670.3"/>
</dbReference>
<dbReference type="RefSeq" id="NP_001011671.1">
    <molecule id="Q9BUK0-1"/>
    <property type="nucleotide sequence ID" value="NM_001011671.3"/>
</dbReference>
<dbReference type="RefSeq" id="NP_001304787.1">
    <molecule id="Q9BUK0-3"/>
    <property type="nucleotide sequence ID" value="NM_001317858.2"/>
</dbReference>
<dbReference type="RefSeq" id="NP_001304788.1">
    <property type="nucleotide sequence ID" value="NM_001317859.1"/>
</dbReference>
<dbReference type="RefSeq" id="NP_077276.2">
    <molecule id="Q9BUK0-2"/>
    <property type="nucleotide sequence ID" value="NM_024300.5"/>
</dbReference>
<dbReference type="PDB" id="2LQT">
    <property type="method" value="NMR"/>
    <property type="chains" value="A=1-85"/>
</dbReference>
<dbReference type="PDBsum" id="2LQT"/>
<dbReference type="BMRB" id="Q9BUK0"/>
<dbReference type="SMR" id="Q9BUK0"/>
<dbReference type="BioGRID" id="122564">
    <property type="interactions" value="10"/>
</dbReference>
<dbReference type="FunCoup" id="Q9BUK0">
    <property type="interactions" value="161"/>
</dbReference>
<dbReference type="IntAct" id="Q9BUK0">
    <property type="interactions" value="4"/>
</dbReference>
<dbReference type="STRING" id="9606.ENSP00000306425"/>
<dbReference type="iPTMnet" id="Q9BUK0"/>
<dbReference type="PhosphoSitePlus" id="Q9BUK0"/>
<dbReference type="BioMuta" id="CHCHD7"/>
<dbReference type="DMDM" id="62510507"/>
<dbReference type="jPOST" id="Q9BUK0"/>
<dbReference type="MassIVE" id="Q9BUK0"/>
<dbReference type="PaxDb" id="9606-ENSP00000306425"/>
<dbReference type="PeptideAtlas" id="Q9BUK0"/>
<dbReference type="ProteomicsDB" id="79095">
    <molecule id="Q9BUK0-1"/>
</dbReference>
<dbReference type="ProteomicsDB" id="79096">
    <molecule id="Q9BUK0-2"/>
</dbReference>
<dbReference type="Pumba" id="Q9BUK0"/>
<dbReference type="Antibodypedia" id="42406">
    <property type="antibodies" value="54 antibodies from 23 providers"/>
</dbReference>
<dbReference type="DNASU" id="79145"/>
<dbReference type="Ensembl" id="ENST00000303759.3">
    <molecule id="Q9BUK0-4"/>
    <property type="protein sequence ID" value="ENSP00000306425.3"/>
    <property type="gene ID" value="ENSG00000170791.18"/>
</dbReference>
<dbReference type="Ensembl" id="ENST00000355315.8">
    <molecule id="Q9BUK0-1"/>
    <property type="protein sequence ID" value="ENSP00000347469.3"/>
    <property type="gene ID" value="ENSG00000170791.18"/>
</dbReference>
<dbReference type="Ensembl" id="ENST00000518801.5">
    <molecule id="Q9BUK0-3"/>
    <property type="protein sequence ID" value="ENSP00000428274.1"/>
    <property type="gene ID" value="ENSG00000170791.18"/>
</dbReference>
<dbReference type="Ensembl" id="ENST00000519367.1">
    <molecule id="Q9BUK0-5"/>
    <property type="protein sequence ID" value="ENSP00000428095.1"/>
    <property type="gene ID" value="ENSG00000170791.18"/>
</dbReference>
<dbReference type="Ensembl" id="ENST00000521524.5">
    <molecule id="Q9BUK0-3"/>
    <property type="protein sequence ID" value="ENSP00000430458.1"/>
    <property type="gene ID" value="ENSG00000170791.18"/>
</dbReference>
<dbReference type="Ensembl" id="ENST00000521831.5">
    <molecule id="Q9BUK0-5"/>
    <property type="protein sequence ID" value="ENSP00000429635.1"/>
    <property type="gene ID" value="ENSG00000170791.18"/>
</dbReference>
<dbReference type="Ensembl" id="ENST00000523975.5">
    <molecule id="Q9BUK0-2"/>
    <property type="protein sequence ID" value="ENSP00000428917.1"/>
    <property type="gene ID" value="ENSG00000170791.18"/>
</dbReference>
<dbReference type="GeneID" id="79145"/>
<dbReference type="KEGG" id="hsa:79145"/>
<dbReference type="MANE-Select" id="ENST00000355315.8">
    <property type="protein sequence ID" value="ENSP00000347469.3"/>
    <property type="RefSeq nucleotide sequence ID" value="NM_001011671.3"/>
    <property type="RefSeq protein sequence ID" value="NP_001011671.1"/>
</dbReference>
<dbReference type="UCSC" id="uc003xss.4">
    <molecule id="Q9BUK0-1"/>
    <property type="organism name" value="human"/>
</dbReference>
<dbReference type="AGR" id="HGNC:28314"/>
<dbReference type="CTD" id="79145"/>
<dbReference type="DisGeNET" id="79145"/>
<dbReference type="GeneCards" id="CHCHD7"/>
<dbReference type="HGNC" id="HGNC:28314">
    <property type="gene designation" value="CHCHD7"/>
</dbReference>
<dbReference type="HPA" id="ENSG00000170791">
    <property type="expression patterns" value="Low tissue specificity"/>
</dbReference>
<dbReference type="MIM" id="611238">
    <property type="type" value="gene"/>
</dbReference>
<dbReference type="neXtProt" id="NX_Q9BUK0"/>
<dbReference type="OpenTargets" id="ENSG00000170791"/>
<dbReference type="PharmGKB" id="PA134883538"/>
<dbReference type="VEuPathDB" id="HostDB:ENSG00000170791"/>
<dbReference type="eggNOG" id="KOG4618">
    <property type="taxonomic scope" value="Eukaryota"/>
</dbReference>
<dbReference type="GeneTree" id="ENSGT00390000001029"/>
<dbReference type="HOGENOM" id="CLU_175044_1_0_1"/>
<dbReference type="InParanoid" id="Q9BUK0"/>
<dbReference type="OMA" id="QELSYKC"/>
<dbReference type="OrthoDB" id="9971592at2759"/>
<dbReference type="PAN-GO" id="Q9BUK0">
    <property type="GO annotations" value="2 GO annotations based on evolutionary models"/>
</dbReference>
<dbReference type="PhylomeDB" id="Q9BUK0"/>
<dbReference type="TreeFam" id="TF300284"/>
<dbReference type="PathwayCommons" id="Q9BUK0"/>
<dbReference type="Reactome" id="R-HSA-1268020">
    <property type="pathway name" value="Mitochondrial protein import"/>
</dbReference>
<dbReference type="SignaLink" id="Q9BUK0"/>
<dbReference type="BioGRID-ORCS" id="79145">
    <property type="hits" value="20 hits in 1163 CRISPR screens"/>
</dbReference>
<dbReference type="ChiTaRS" id="CHCHD7">
    <property type="organism name" value="human"/>
</dbReference>
<dbReference type="EvolutionaryTrace" id="Q9BUK0"/>
<dbReference type="GenomeRNAi" id="79145"/>
<dbReference type="Pharos" id="Q9BUK0">
    <property type="development level" value="Tdark"/>
</dbReference>
<dbReference type="PRO" id="PR:Q9BUK0"/>
<dbReference type="Proteomes" id="UP000005640">
    <property type="component" value="Chromosome 8"/>
</dbReference>
<dbReference type="RNAct" id="Q9BUK0">
    <property type="molecule type" value="protein"/>
</dbReference>
<dbReference type="Bgee" id="ENSG00000170791">
    <property type="expression patterns" value="Expressed in secondary oocyte and 197 other cell types or tissues"/>
</dbReference>
<dbReference type="ExpressionAtlas" id="Q9BUK0">
    <property type="expression patterns" value="baseline and differential"/>
</dbReference>
<dbReference type="GO" id="GO:0005758">
    <property type="term" value="C:mitochondrial intermembrane space"/>
    <property type="evidence" value="ECO:0007669"/>
    <property type="project" value="UniProtKB-SubCell"/>
</dbReference>
<dbReference type="GO" id="GO:0005739">
    <property type="term" value="C:mitochondrion"/>
    <property type="evidence" value="ECO:0006056"/>
    <property type="project" value="FlyBase"/>
</dbReference>
<dbReference type="GO" id="GO:0033108">
    <property type="term" value="P:mitochondrial respiratory chain complex assembly"/>
    <property type="evidence" value="ECO:0000318"/>
    <property type="project" value="GO_Central"/>
</dbReference>
<dbReference type="Gene3D" id="1.10.287.1130">
    <property type="entry name" value="CytochromE C oxidase copper chaperone"/>
    <property type="match status" value="1"/>
</dbReference>
<dbReference type="InterPro" id="IPR051040">
    <property type="entry name" value="COX23"/>
</dbReference>
<dbReference type="InterPro" id="IPR048280">
    <property type="entry name" value="COX6B-like"/>
</dbReference>
<dbReference type="InterPro" id="IPR009069">
    <property type="entry name" value="Cys_alpha_HP_mot_SF"/>
</dbReference>
<dbReference type="PANTHER" id="PTHR46811">
    <property type="entry name" value="COILED-COIL-HELIX-COILED-COIL-HELIX DOMAIN-CONTAINING PROTEIN 7"/>
    <property type="match status" value="1"/>
</dbReference>
<dbReference type="PANTHER" id="PTHR46811:SF1">
    <property type="entry name" value="COILED-COIL-HELIX-COILED-COIL-HELIX DOMAIN-CONTAINING PROTEIN 7"/>
    <property type="match status" value="1"/>
</dbReference>
<dbReference type="Pfam" id="PF02297">
    <property type="entry name" value="COX6B"/>
    <property type="match status" value="1"/>
</dbReference>
<dbReference type="SUPFAM" id="SSF47072">
    <property type="entry name" value="Cysteine alpha-hairpin motif"/>
    <property type="match status" value="1"/>
</dbReference>
<dbReference type="PROSITE" id="PS51808">
    <property type="entry name" value="CHCH"/>
    <property type="match status" value="1"/>
</dbReference>
<reference key="1">
    <citation type="submission" date="2001-12" db="EMBL/GenBank/DDBJ databases">
        <authorList>
            <person name="Guo J.H."/>
            <person name="Zan Q."/>
            <person name="Yu L."/>
        </authorList>
    </citation>
    <scope>NUCLEOTIDE SEQUENCE [LARGE SCALE MRNA] (ISOFORM 3)</scope>
</reference>
<reference key="2">
    <citation type="journal article" date="2004" name="Nat. Genet.">
        <title>Complete sequencing and characterization of 21,243 full-length human cDNAs.</title>
        <authorList>
            <person name="Ota T."/>
            <person name="Suzuki Y."/>
            <person name="Nishikawa T."/>
            <person name="Otsuki T."/>
            <person name="Sugiyama T."/>
            <person name="Irie R."/>
            <person name="Wakamatsu A."/>
            <person name="Hayashi K."/>
            <person name="Sato H."/>
            <person name="Nagai K."/>
            <person name="Kimura K."/>
            <person name="Makita H."/>
            <person name="Sekine M."/>
            <person name="Obayashi M."/>
            <person name="Nishi T."/>
            <person name="Shibahara T."/>
            <person name="Tanaka T."/>
            <person name="Ishii S."/>
            <person name="Yamamoto J."/>
            <person name="Saito K."/>
            <person name="Kawai Y."/>
            <person name="Isono Y."/>
            <person name="Nakamura Y."/>
            <person name="Nagahari K."/>
            <person name="Murakami K."/>
            <person name="Yasuda T."/>
            <person name="Iwayanagi T."/>
            <person name="Wagatsuma M."/>
            <person name="Shiratori A."/>
            <person name="Sudo H."/>
            <person name="Hosoiri T."/>
            <person name="Kaku Y."/>
            <person name="Kodaira H."/>
            <person name="Kondo H."/>
            <person name="Sugawara M."/>
            <person name="Takahashi M."/>
            <person name="Kanda K."/>
            <person name="Yokoi T."/>
            <person name="Furuya T."/>
            <person name="Kikkawa E."/>
            <person name="Omura Y."/>
            <person name="Abe K."/>
            <person name="Kamihara K."/>
            <person name="Katsuta N."/>
            <person name="Sato K."/>
            <person name="Tanikawa M."/>
            <person name="Yamazaki M."/>
            <person name="Ninomiya K."/>
            <person name="Ishibashi T."/>
            <person name="Yamashita H."/>
            <person name="Murakawa K."/>
            <person name="Fujimori K."/>
            <person name="Tanai H."/>
            <person name="Kimata M."/>
            <person name="Watanabe M."/>
            <person name="Hiraoka S."/>
            <person name="Chiba Y."/>
            <person name="Ishida S."/>
            <person name="Ono Y."/>
            <person name="Takiguchi S."/>
            <person name="Watanabe S."/>
            <person name="Yosida M."/>
            <person name="Hotuta T."/>
            <person name="Kusano J."/>
            <person name="Kanehori K."/>
            <person name="Takahashi-Fujii A."/>
            <person name="Hara H."/>
            <person name="Tanase T.-O."/>
            <person name="Nomura Y."/>
            <person name="Togiya S."/>
            <person name="Komai F."/>
            <person name="Hara R."/>
            <person name="Takeuchi K."/>
            <person name="Arita M."/>
            <person name="Imose N."/>
            <person name="Musashino K."/>
            <person name="Yuuki H."/>
            <person name="Oshima A."/>
            <person name="Sasaki N."/>
            <person name="Aotsuka S."/>
            <person name="Yoshikawa Y."/>
            <person name="Matsunawa H."/>
            <person name="Ichihara T."/>
            <person name="Shiohata N."/>
            <person name="Sano S."/>
            <person name="Moriya S."/>
            <person name="Momiyama H."/>
            <person name="Satoh N."/>
            <person name="Takami S."/>
            <person name="Terashima Y."/>
            <person name="Suzuki O."/>
            <person name="Nakagawa S."/>
            <person name="Senoh A."/>
            <person name="Mizoguchi H."/>
            <person name="Goto Y."/>
            <person name="Shimizu F."/>
            <person name="Wakebe H."/>
            <person name="Hishigaki H."/>
            <person name="Watanabe T."/>
            <person name="Sugiyama A."/>
            <person name="Takemoto M."/>
            <person name="Kawakami B."/>
            <person name="Yamazaki M."/>
            <person name="Watanabe K."/>
            <person name="Kumagai A."/>
            <person name="Itakura S."/>
            <person name="Fukuzumi Y."/>
            <person name="Fujimori Y."/>
            <person name="Komiyama M."/>
            <person name="Tashiro H."/>
            <person name="Tanigami A."/>
            <person name="Fujiwara T."/>
            <person name="Ono T."/>
            <person name="Yamada K."/>
            <person name="Fujii Y."/>
            <person name="Ozaki K."/>
            <person name="Hirao M."/>
            <person name="Ohmori Y."/>
            <person name="Kawabata A."/>
            <person name="Hikiji T."/>
            <person name="Kobatake N."/>
            <person name="Inagaki H."/>
            <person name="Ikema Y."/>
            <person name="Okamoto S."/>
            <person name="Okitani R."/>
            <person name="Kawakami T."/>
            <person name="Noguchi S."/>
            <person name="Itoh T."/>
            <person name="Shigeta K."/>
            <person name="Senba T."/>
            <person name="Matsumura K."/>
            <person name="Nakajima Y."/>
            <person name="Mizuno T."/>
            <person name="Morinaga M."/>
            <person name="Sasaki M."/>
            <person name="Togashi T."/>
            <person name="Oyama M."/>
            <person name="Hata H."/>
            <person name="Watanabe M."/>
            <person name="Komatsu T."/>
            <person name="Mizushima-Sugano J."/>
            <person name="Satoh T."/>
            <person name="Shirai Y."/>
            <person name="Takahashi Y."/>
            <person name="Nakagawa K."/>
            <person name="Okumura K."/>
            <person name="Nagase T."/>
            <person name="Nomura N."/>
            <person name="Kikuchi H."/>
            <person name="Masuho Y."/>
            <person name="Yamashita R."/>
            <person name="Nakai K."/>
            <person name="Yada T."/>
            <person name="Nakamura Y."/>
            <person name="Ohara O."/>
            <person name="Isogai T."/>
            <person name="Sugano S."/>
        </authorList>
    </citation>
    <scope>NUCLEOTIDE SEQUENCE [LARGE SCALE MRNA] (ISOFORMS 1 AND 2)</scope>
    <source>
        <tissue>Heart</tissue>
        <tissue>Subthalamic nucleus</tissue>
    </source>
</reference>
<reference key="3">
    <citation type="journal article" date="2006" name="Nature">
        <title>DNA sequence and analysis of human chromosome 8.</title>
        <authorList>
            <person name="Nusbaum C."/>
            <person name="Mikkelsen T.S."/>
            <person name="Zody M.C."/>
            <person name="Asakawa S."/>
            <person name="Taudien S."/>
            <person name="Garber M."/>
            <person name="Kodira C.D."/>
            <person name="Schueler M.G."/>
            <person name="Shimizu A."/>
            <person name="Whittaker C.A."/>
            <person name="Chang J.L."/>
            <person name="Cuomo C.A."/>
            <person name="Dewar K."/>
            <person name="FitzGerald M.G."/>
            <person name="Yang X."/>
            <person name="Allen N.R."/>
            <person name="Anderson S."/>
            <person name="Asakawa T."/>
            <person name="Blechschmidt K."/>
            <person name="Bloom T."/>
            <person name="Borowsky M.L."/>
            <person name="Butler J."/>
            <person name="Cook A."/>
            <person name="Corum B."/>
            <person name="DeArellano K."/>
            <person name="DeCaprio D."/>
            <person name="Dooley K.T."/>
            <person name="Dorris L. III"/>
            <person name="Engels R."/>
            <person name="Gloeckner G."/>
            <person name="Hafez N."/>
            <person name="Hagopian D.S."/>
            <person name="Hall J.L."/>
            <person name="Ishikawa S.K."/>
            <person name="Jaffe D.B."/>
            <person name="Kamat A."/>
            <person name="Kudoh J."/>
            <person name="Lehmann R."/>
            <person name="Lokitsang T."/>
            <person name="Macdonald P."/>
            <person name="Major J.E."/>
            <person name="Matthews C.D."/>
            <person name="Mauceli E."/>
            <person name="Menzel U."/>
            <person name="Mihalev A.H."/>
            <person name="Minoshima S."/>
            <person name="Murayama Y."/>
            <person name="Naylor J.W."/>
            <person name="Nicol R."/>
            <person name="Nguyen C."/>
            <person name="O'Leary S.B."/>
            <person name="O'Neill K."/>
            <person name="Parker S.C.J."/>
            <person name="Polley A."/>
            <person name="Raymond C.K."/>
            <person name="Reichwald K."/>
            <person name="Rodriguez J."/>
            <person name="Sasaki T."/>
            <person name="Schilhabel M."/>
            <person name="Siddiqui R."/>
            <person name="Smith C.L."/>
            <person name="Sneddon T.P."/>
            <person name="Talamas J.A."/>
            <person name="Tenzin P."/>
            <person name="Topham K."/>
            <person name="Venkataraman V."/>
            <person name="Wen G."/>
            <person name="Yamazaki S."/>
            <person name="Young S.K."/>
            <person name="Zeng Q."/>
            <person name="Zimmer A.R."/>
            <person name="Rosenthal A."/>
            <person name="Birren B.W."/>
            <person name="Platzer M."/>
            <person name="Shimizu N."/>
            <person name="Lander E.S."/>
        </authorList>
    </citation>
    <scope>NUCLEOTIDE SEQUENCE [LARGE SCALE GENOMIC DNA]</scope>
</reference>
<reference key="4">
    <citation type="submission" date="2005-07" db="EMBL/GenBank/DDBJ databases">
        <authorList>
            <person name="Mural R.J."/>
            <person name="Istrail S."/>
            <person name="Sutton G.G."/>
            <person name="Florea L."/>
            <person name="Halpern A.L."/>
            <person name="Mobarry C.M."/>
            <person name="Lippert R."/>
            <person name="Walenz B."/>
            <person name="Shatkay H."/>
            <person name="Dew I."/>
            <person name="Miller J.R."/>
            <person name="Flanigan M.J."/>
            <person name="Edwards N.J."/>
            <person name="Bolanos R."/>
            <person name="Fasulo D."/>
            <person name="Halldorsson B.V."/>
            <person name="Hannenhalli S."/>
            <person name="Turner R."/>
            <person name="Yooseph S."/>
            <person name="Lu F."/>
            <person name="Nusskern D.R."/>
            <person name="Shue B.C."/>
            <person name="Zheng X.H."/>
            <person name="Zhong F."/>
            <person name="Delcher A.L."/>
            <person name="Huson D.H."/>
            <person name="Kravitz S.A."/>
            <person name="Mouchard L."/>
            <person name="Reinert K."/>
            <person name="Remington K.A."/>
            <person name="Clark A.G."/>
            <person name="Waterman M.S."/>
            <person name="Eichler E.E."/>
            <person name="Adams M.D."/>
            <person name="Hunkapiller M.W."/>
            <person name="Myers E.W."/>
            <person name="Venter J.C."/>
        </authorList>
    </citation>
    <scope>NUCLEOTIDE SEQUENCE [LARGE SCALE GENOMIC DNA]</scope>
</reference>
<reference key="5">
    <citation type="journal article" date="2004" name="Genome Res.">
        <title>The status, quality, and expansion of the NIH full-length cDNA project: the Mammalian Gene Collection (MGC).</title>
        <authorList>
            <consortium name="The MGC Project Team"/>
        </authorList>
    </citation>
    <scope>NUCLEOTIDE SEQUENCE [LARGE SCALE MRNA] (ISOFORM 2)</scope>
    <source>
        <tissue>Placenta</tissue>
    </source>
</reference>
<reference key="6">
    <citation type="journal article" date="2006" name="Genes Chromosomes Cancer">
        <title>CHCHD7-PLAG1 and TCEA1-PLAG1 gene fusions resulting from cryptic, intrachromosomal 8q rearrangements in pleomorphic salivary gland adenomas.</title>
        <authorList>
            <person name="Asp J."/>
            <person name="Persson F."/>
            <person name="Kost-Alimova M."/>
            <person name="Stenman G."/>
        </authorList>
    </citation>
    <scope>CHROMOSOMAL REARRANGEMENT WITH PLAG1</scope>
</reference>
<reference key="7">
    <citation type="journal article" date="2012" name="J. Struct. Biol.">
        <title>Structural characterization of CHCHD5 and CHCHD7: two atypical human twin CX9C proteins.</title>
        <authorList>
            <person name="Banci L."/>
            <person name="Bertini I."/>
            <person name="Ciofi-Baffoni S."/>
            <person name="Jaiswal D."/>
            <person name="Neri S."/>
            <person name="Peruzzini R."/>
            <person name="Winkelmann J."/>
        </authorList>
    </citation>
    <scope>STRUCTURE BY NMR</scope>
    <scope>SUBUNIT</scope>
    <scope>PUTATIVE SUBCELLULAR LOCATION</scope>
    <scope>IDENTIFICATION BY MASS SPECTROMETRY</scope>
    <scope>DISULFIDE BONDS</scope>
</reference>
<gene>
    <name type="primary">CHCHD7</name>
</gene>
<protein>
    <recommendedName>
        <fullName>Coiled-coil-helix-coiled-coil-helix domain-containing protein 7</fullName>
    </recommendedName>
</protein>
<sequence>MPSVTQRLRDPDINPCLSESDASTRCLDENNYDRERCSTYFLRYKNCRRFWNSIVMQRRKNGVKPFMPTAAERDEILRAVGNMPY</sequence>
<proteinExistence type="evidence at protein level"/>
<evidence type="ECO:0000255" key="1">
    <source>
        <dbReference type="PROSITE-ProRule" id="PRU01150"/>
    </source>
</evidence>
<evidence type="ECO:0000269" key="2">
    <source>
    </source>
</evidence>
<evidence type="ECO:0000269" key="3">
    <source>
    </source>
</evidence>
<evidence type="ECO:0000303" key="4">
    <source>
    </source>
</evidence>
<evidence type="ECO:0000303" key="5">
    <source>
    </source>
</evidence>
<evidence type="ECO:0000303" key="6">
    <source ref="1"/>
</evidence>
<evidence type="ECO:0000305" key="7"/>
<evidence type="ECO:0007829" key="8">
    <source>
        <dbReference type="PDB" id="2LQT"/>
    </source>
</evidence>
<organism>
    <name type="scientific">Homo sapiens</name>
    <name type="common">Human</name>
    <dbReference type="NCBI Taxonomy" id="9606"/>
    <lineage>
        <taxon>Eukaryota</taxon>
        <taxon>Metazoa</taxon>
        <taxon>Chordata</taxon>
        <taxon>Craniata</taxon>
        <taxon>Vertebrata</taxon>
        <taxon>Euteleostomi</taxon>
        <taxon>Mammalia</taxon>
        <taxon>Eutheria</taxon>
        <taxon>Euarchontoglires</taxon>
        <taxon>Primates</taxon>
        <taxon>Haplorrhini</taxon>
        <taxon>Catarrhini</taxon>
        <taxon>Hominidae</taxon>
        <taxon>Homo</taxon>
    </lineage>
</organism>
<name>CHCH7_HUMAN</name>
<comment type="subunit">
    <text evidence="3">Monomer.</text>
</comment>
<comment type="subcellular location">
    <subcellularLocation>
        <location evidence="7">Mitochondrion intermembrane space</location>
    </subcellularLocation>
</comment>
<comment type="alternative products">
    <event type="alternative splicing"/>
    <isoform>
        <id>Q9BUK0-1</id>
        <name>1</name>
        <sequence type="displayed"/>
    </isoform>
    <isoform>
        <id>Q9BUK0-2</id>
        <name>2</name>
        <sequence type="described" ref="VSP_038076"/>
    </isoform>
    <isoform>
        <id>Q9BUK0-3</id>
        <name>3</name>
        <sequence type="described" ref="VSP_038076 VSP_038077"/>
    </isoform>
    <isoform>
        <id>Q9BUK0-4</id>
        <name>4</name>
        <sequence type="described" ref="VSP_046698"/>
    </isoform>
    <isoform>
        <id>Q9BUK0-5</id>
        <name>5</name>
        <sequence type="described" ref="VSP_038077"/>
    </isoform>
</comment>
<comment type="disease">
    <text evidence="2">A chromosomal aberration involving CHCHD7 is found in salivary gland pleiomorphic adenomas, the most common benign epithelial tumors of the salivary gland. Translocation t(6;8)(p21.3-22;q13) with PLAG1.</text>
</comment>
<comment type="similarity">
    <text evidence="7">Belongs to the CHCHD7 family.</text>
</comment>
<comment type="sequence caution" evidence="7">
    <conflict type="erroneous gene model prediction">
        <sequence resource="EMBL-CDS" id="EAW86776"/>
    </conflict>
</comment>
<feature type="chain" id="PRO_0000129171" description="Coiled-coil-helix-coiled-coil-helix domain-containing protein 7">
    <location>
        <begin position="1"/>
        <end position="85"/>
    </location>
</feature>
<feature type="domain" description="CHCH" evidence="1">
    <location>
        <begin position="13"/>
        <end position="55"/>
    </location>
</feature>
<feature type="short sequence motif" description="Cx9C motif 1" evidence="1">
    <location>
        <begin position="16"/>
        <end position="26"/>
    </location>
</feature>
<feature type="short sequence motif" description="Cx9C motif 2" evidence="1">
    <location>
        <begin position="37"/>
        <end position="47"/>
    </location>
</feature>
<feature type="disulfide bond" evidence="1 3">
    <location>
        <begin position="16"/>
        <end position="47"/>
    </location>
</feature>
<feature type="disulfide bond" evidence="1 3">
    <location>
        <begin position="26"/>
        <end position="37"/>
    </location>
</feature>
<feature type="splice variant" id="VSP_038076" description="In isoform 2 and isoform 3." evidence="4 5 6">
    <original>M</original>
    <variation>MHQTRTGKKTVRM</variation>
    <location>
        <position position="1"/>
    </location>
</feature>
<feature type="splice variant" id="VSP_046698" description="In isoform 4." evidence="7">
    <original>M</original>
    <variation>MKCEETHAPNSNWVYVMLPSKKTVRM</variation>
    <location>
        <position position="1"/>
    </location>
</feature>
<feature type="splice variant" id="VSP_038077" description="In isoform 3 and isoform 5." evidence="6">
    <original>ESDASTRCLDENNYDRERCSTYFLRYKNCRRFWNSIVMQRRKNGVKPFMPTAAERDEILRAVGNMPY</original>
    <variation>ILFYLLNDASLISVRNLMLPPDVWMKITMTGKGVPLTS</variation>
    <location>
        <begin position="19"/>
        <end position="85"/>
    </location>
</feature>
<feature type="helix" evidence="8">
    <location>
        <begin position="17"/>
        <end position="29"/>
    </location>
</feature>
<feature type="turn" evidence="8">
    <location>
        <begin position="30"/>
        <end position="32"/>
    </location>
</feature>
<feature type="turn" evidence="8">
    <location>
        <begin position="34"/>
        <end position="37"/>
    </location>
</feature>
<feature type="helix" evidence="8">
    <location>
        <begin position="38"/>
        <end position="59"/>
    </location>
</feature>
<feature type="helix" evidence="8">
    <location>
        <begin position="70"/>
        <end position="80"/>
    </location>
</feature>
<accession>Q9BUK0</accession>
<accession>A8K223</accession>
<accession>E9PBH3</accession>
<accession>J3KNE9</accession>
<accession>Q7Z588</accession>
<keyword id="KW-0002">3D-structure</keyword>
<keyword id="KW-0025">Alternative splicing</keyword>
<keyword id="KW-0160">Chromosomal rearrangement</keyword>
<keyword id="KW-1015">Disulfide bond</keyword>
<keyword id="KW-0496">Mitochondrion</keyword>
<keyword id="KW-1267">Proteomics identification</keyword>
<keyword id="KW-1185">Reference proteome</keyword>